<dbReference type="EMBL" id="AP010904">
    <property type="protein sequence ID" value="BAH75562.1"/>
    <property type="molecule type" value="Genomic_DNA"/>
</dbReference>
<dbReference type="RefSeq" id="WP_015860749.1">
    <property type="nucleotide sequence ID" value="NC_012796.1"/>
</dbReference>
<dbReference type="STRING" id="573370.DMR_20710"/>
<dbReference type="KEGG" id="dma:DMR_20710"/>
<dbReference type="eggNOG" id="COG1671">
    <property type="taxonomic scope" value="Bacteria"/>
</dbReference>
<dbReference type="HOGENOM" id="CLU_106619_2_1_7"/>
<dbReference type="OrthoDB" id="9798918at2"/>
<dbReference type="Proteomes" id="UP000009071">
    <property type="component" value="Chromosome"/>
</dbReference>
<dbReference type="CDD" id="cd18720">
    <property type="entry name" value="PIN_YqxD-like"/>
    <property type="match status" value="1"/>
</dbReference>
<dbReference type="HAMAP" id="MF_00489">
    <property type="entry name" value="UPF0178"/>
    <property type="match status" value="1"/>
</dbReference>
<dbReference type="InterPro" id="IPR003791">
    <property type="entry name" value="UPF0178"/>
</dbReference>
<dbReference type="NCBIfam" id="NF001095">
    <property type="entry name" value="PRK00124.1"/>
    <property type="match status" value="1"/>
</dbReference>
<dbReference type="PANTHER" id="PTHR35146">
    <property type="entry name" value="UPF0178 PROTEIN YAII"/>
    <property type="match status" value="1"/>
</dbReference>
<dbReference type="PANTHER" id="PTHR35146:SF1">
    <property type="entry name" value="UPF0178 PROTEIN YAII"/>
    <property type="match status" value="1"/>
</dbReference>
<dbReference type="Pfam" id="PF02639">
    <property type="entry name" value="DUF188"/>
    <property type="match status" value="1"/>
</dbReference>
<protein>
    <recommendedName>
        <fullName evidence="1">UPF0178 protein DMR_20710</fullName>
    </recommendedName>
</protein>
<reference key="1">
    <citation type="journal article" date="2009" name="Genome Res.">
        <title>Whole genome sequence of Desulfovibrio magneticus strain RS-1 revealed common gene clusters in magnetotactic bacteria.</title>
        <authorList>
            <person name="Nakazawa H."/>
            <person name="Arakaki A."/>
            <person name="Narita-Yamada S."/>
            <person name="Yashiro I."/>
            <person name="Jinno K."/>
            <person name="Aoki N."/>
            <person name="Tsuruyama A."/>
            <person name="Okamura Y."/>
            <person name="Tanikawa S."/>
            <person name="Fujita N."/>
            <person name="Takeyama H."/>
            <person name="Matsunaga T."/>
        </authorList>
    </citation>
    <scope>NUCLEOTIDE SEQUENCE [LARGE SCALE GENOMIC DNA]</scope>
    <source>
        <strain>ATCC 700980 / DSM 13731 / RS-1</strain>
    </source>
</reference>
<sequence length="150" mass="16283">MKIYADADALPTPIKDILCRAAMRRGIALVLVANKALRFPESPHITAVRVGQGFDVVDGVIVERVAPGDLVITADIPLAAQVVEKDAHALNPRGERYTRDNILGKLAMRGLLSELRDSGVVTGGPPPLSNRDREAFANQLDQFLRQYTGN</sequence>
<comment type="similarity">
    <text evidence="1">Belongs to the UPF0178 family.</text>
</comment>
<proteinExistence type="inferred from homology"/>
<name>Y2071_SOLM1</name>
<gene>
    <name type="ordered locus">DMR_20710</name>
</gene>
<accession>C4XS40</accession>
<feature type="chain" id="PRO_1000206453" description="UPF0178 protein DMR_20710">
    <location>
        <begin position="1"/>
        <end position="150"/>
    </location>
</feature>
<evidence type="ECO:0000255" key="1">
    <source>
        <dbReference type="HAMAP-Rule" id="MF_00489"/>
    </source>
</evidence>
<organism>
    <name type="scientific">Solidesulfovibrio magneticus (strain ATCC 700980 / DSM 13731 / RS-1)</name>
    <name type="common">Desulfovibrio magneticus</name>
    <dbReference type="NCBI Taxonomy" id="573370"/>
    <lineage>
        <taxon>Bacteria</taxon>
        <taxon>Pseudomonadati</taxon>
        <taxon>Thermodesulfobacteriota</taxon>
        <taxon>Desulfovibrionia</taxon>
        <taxon>Desulfovibrionales</taxon>
        <taxon>Desulfovibrionaceae</taxon>
        <taxon>Solidesulfovibrio</taxon>
    </lineage>
</organism>